<reference key="1">
    <citation type="journal article" date="1999" name="Plant Cell">
        <title>The complete mitochondrial DNA sequences of Nephroselmis olivacea and Pedinomonas minor: two radically different evolutionary patterns within the green algae.</title>
        <authorList>
            <person name="Turmel M."/>
            <person name="Lemieux C."/>
            <person name="Burger G."/>
            <person name="Lang B.F."/>
            <person name="Otis C."/>
            <person name="Plante I."/>
            <person name="Gray M.W."/>
        </authorList>
    </citation>
    <scope>NUCLEOTIDE SEQUENCE [GENOMIC DNA]</scope>
    <source>
        <strain>NIES-484 / S-N-5-8</strain>
    </source>
</reference>
<comment type="subcellular location">
    <subcellularLocation>
        <location evidence="2">Mitochondrion membrane</location>
        <topology evidence="2">Multi-pass membrane protein</topology>
    </subcellularLocation>
</comment>
<comment type="similarity">
    <text evidence="2">Belongs to the TatC family.</text>
</comment>
<dbReference type="EMBL" id="AF110138">
    <property type="protein sequence ID" value="AAF03203.1"/>
    <property type="molecule type" value="Genomic_DNA"/>
</dbReference>
<dbReference type="RefSeq" id="YP_665676.1">
    <property type="nucleotide sequence ID" value="NC_008239.1"/>
</dbReference>
<dbReference type="SMR" id="Q9TC94"/>
<dbReference type="GeneID" id="4178043"/>
<dbReference type="GO" id="GO:0031966">
    <property type="term" value="C:mitochondrial membrane"/>
    <property type="evidence" value="ECO:0007669"/>
    <property type="project" value="UniProtKB-SubCell"/>
</dbReference>
<dbReference type="GO" id="GO:0033281">
    <property type="term" value="C:TAT protein transport complex"/>
    <property type="evidence" value="ECO:0007669"/>
    <property type="project" value="TreeGrafter"/>
</dbReference>
<dbReference type="GO" id="GO:0009977">
    <property type="term" value="F:proton motive force dependent protein transmembrane transporter activity"/>
    <property type="evidence" value="ECO:0007669"/>
    <property type="project" value="TreeGrafter"/>
</dbReference>
<dbReference type="GO" id="GO:0065002">
    <property type="term" value="P:intracellular protein transmembrane transport"/>
    <property type="evidence" value="ECO:0007669"/>
    <property type="project" value="TreeGrafter"/>
</dbReference>
<dbReference type="GO" id="GO:0043953">
    <property type="term" value="P:protein transport by the Tat complex"/>
    <property type="evidence" value="ECO:0007669"/>
    <property type="project" value="TreeGrafter"/>
</dbReference>
<dbReference type="InterPro" id="IPR019820">
    <property type="entry name" value="Sec-indep_translocase_CS"/>
</dbReference>
<dbReference type="InterPro" id="IPR002033">
    <property type="entry name" value="TatC"/>
</dbReference>
<dbReference type="PANTHER" id="PTHR30371">
    <property type="entry name" value="SEC-INDEPENDENT PROTEIN TRANSLOCASE PROTEIN TATC"/>
    <property type="match status" value="1"/>
</dbReference>
<dbReference type="PANTHER" id="PTHR30371:SF0">
    <property type="entry name" value="SEC-INDEPENDENT PROTEIN TRANSLOCASE PROTEIN TATC, CHLOROPLASTIC-RELATED"/>
    <property type="match status" value="1"/>
</dbReference>
<dbReference type="Pfam" id="PF00902">
    <property type="entry name" value="TatC"/>
    <property type="match status" value="1"/>
</dbReference>
<dbReference type="PRINTS" id="PR01840">
    <property type="entry name" value="TATCFAMILY"/>
</dbReference>
<dbReference type="PROSITE" id="PS01218">
    <property type="entry name" value="TATC"/>
    <property type="match status" value="1"/>
</dbReference>
<gene>
    <name type="primary">YMF16</name>
</gene>
<keyword id="KW-0472">Membrane</keyword>
<keyword id="KW-0496">Mitochondrion</keyword>
<keyword id="KW-0812">Transmembrane</keyword>
<keyword id="KW-1133">Transmembrane helix</keyword>
<feature type="chain" id="PRO_0000098106" description="Uncharacterized tatC-like protein ymf16">
    <location>
        <begin position="1"/>
        <end position="247"/>
    </location>
</feature>
<feature type="transmembrane region" description="Helical" evidence="1">
    <location>
        <begin position="19"/>
        <end position="39"/>
    </location>
</feature>
<feature type="transmembrane region" description="Helical" evidence="1">
    <location>
        <begin position="73"/>
        <end position="93"/>
    </location>
</feature>
<feature type="transmembrane region" description="Helical" evidence="1">
    <location>
        <begin position="106"/>
        <end position="126"/>
    </location>
</feature>
<feature type="transmembrane region" description="Helical" evidence="1">
    <location>
        <begin position="155"/>
        <end position="175"/>
    </location>
</feature>
<feature type="transmembrane region" description="Helical" evidence="1">
    <location>
        <begin position="196"/>
        <end position="216"/>
    </location>
</feature>
<feature type="transmembrane region" description="Helical" evidence="1">
    <location>
        <begin position="217"/>
        <end position="237"/>
    </location>
</feature>
<geneLocation type="mitochondrion"/>
<sequence>MNFVISQHFNEIKYRFLYIFFTFLLCFIICTIYSESIMFFYVHPLINLTSMQGKHLIFTEMSEAFHTYIFLCFFTSIYCTFPYFFYQFWAFFIPSTYQFERLQLRFLSFFFFTLLFFSCIIIYFIILPEIWSFFLHFEKKSYYFNLQLEARISSYIQFTFQIFSYFFVLFQCPLFTHFSLNLNLLTISFLVNSRKYIYFLFLILAAFLSPPDILSQFFLFSLIVFMYELCVFYSCFYDSLRERIKTF</sequence>
<protein>
    <recommendedName>
        <fullName>Uncharacterized tatC-like protein ymf16</fullName>
    </recommendedName>
</protein>
<proteinExistence type="inferred from homology"/>
<name>YMF16_NEPOL</name>
<organism>
    <name type="scientific">Nephroselmis olivacea</name>
    <name type="common">Green alga</name>
    <dbReference type="NCBI Taxonomy" id="31312"/>
    <lineage>
        <taxon>Eukaryota</taxon>
        <taxon>Viridiplantae</taxon>
        <taxon>Chlorophyta</taxon>
        <taxon>Nephroselmidophyceae</taxon>
        <taxon>Nephroselmidales</taxon>
        <taxon>Nephroselmidaceae</taxon>
        <taxon>Nephroselmis</taxon>
    </lineage>
</organism>
<accession>Q9TC94</accession>
<evidence type="ECO:0000255" key="1"/>
<evidence type="ECO:0000305" key="2"/>